<organismHost>
    <name type="scientific">Homo sapiens</name>
    <name type="common">Human</name>
    <dbReference type="NCBI Taxonomy" id="9606"/>
</organismHost>
<accession>P06938</accession>
<feature type="chain" id="PRO_0000085463" description="Protein Vpr">
    <location>
        <begin position="1"/>
        <end position="105"/>
    </location>
</feature>
<feature type="region of interest" description="Disordered" evidence="2">
    <location>
        <begin position="84"/>
        <end position="105"/>
    </location>
</feature>
<feature type="modified residue" description="Phosphoserine; by host" evidence="1">
    <location>
        <position position="84"/>
    </location>
</feature>
<name>VPR_HV2RO</name>
<reference key="1">
    <citation type="journal article" date="1987" name="Nature">
        <title>Genome organization and transactivation of the human immunodeficiency virus type 2.</title>
        <authorList>
            <person name="Guyader M."/>
            <person name="Emerman M."/>
            <person name="Sonigo P."/>
            <person name="Clavel F."/>
            <person name="Montagnier L."/>
            <person name="Alizon M."/>
        </authorList>
    </citation>
    <scope>NUCLEOTIDE SEQUENCE [GENOMIC DNA]</scope>
</reference>
<organism>
    <name type="scientific">Human immunodeficiency virus type 2 subtype A (isolate ROD)</name>
    <name type="common">HIV-2</name>
    <dbReference type="NCBI Taxonomy" id="11720"/>
    <lineage>
        <taxon>Viruses</taxon>
        <taxon>Riboviria</taxon>
        <taxon>Pararnavirae</taxon>
        <taxon>Artverviricota</taxon>
        <taxon>Revtraviricetes</taxon>
        <taxon>Ortervirales</taxon>
        <taxon>Retroviridae</taxon>
        <taxon>Orthoretrovirinae</taxon>
        <taxon>Lentivirus</taxon>
        <taxon>Human immunodeficiency virus 2</taxon>
    </lineage>
</organism>
<keyword id="KW-0010">Activator</keyword>
<keyword id="KW-0014">AIDS</keyword>
<keyword id="KW-0131">Cell cycle</keyword>
<keyword id="KW-1079">Host G2/M cell cycle arrest by virus</keyword>
<keyword id="KW-1048">Host nucleus</keyword>
<keyword id="KW-0945">Host-virus interaction</keyword>
<keyword id="KW-1121">Modulation of host cell cycle by virus</keyword>
<keyword id="KW-0597">Phosphoprotein</keyword>
<keyword id="KW-0804">Transcription</keyword>
<keyword id="KW-0805">Transcription regulation</keyword>
<keyword id="KW-1163">Viral penetration into host nucleus</keyword>
<keyword id="KW-0946">Virion</keyword>
<keyword id="KW-1160">Virus entry into host cell</keyword>
<evidence type="ECO:0000250" key="1"/>
<evidence type="ECO:0000256" key="2">
    <source>
        <dbReference type="SAM" id="MobiDB-lite"/>
    </source>
</evidence>
<proteinExistence type="inferred from homology"/>
<comment type="function">
    <text evidence="1">Stimulates gene expression driven by the HIV-2 LTR. Prevents infected cells from undergoing mitosis and proliferating, by inducing arrest or delay in the G2 phase of the cell cycle. Cell cycle arrest creates a favorable environment for maximizing viral expression and production (By similarity).</text>
</comment>
<comment type="subunit">
    <text evidence="1">Interacts with human UNG.</text>
</comment>
<comment type="subcellular location">
    <subcellularLocation>
        <location>Virion</location>
    </subcellularLocation>
    <subcellularLocation>
        <location evidence="1">Host nucleus</location>
    </subcellularLocation>
</comment>
<dbReference type="EMBL" id="M15390">
    <property type="protein sequence ID" value="AAB00767.1"/>
    <property type="molecule type" value="Genomic_DNA"/>
</dbReference>
<dbReference type="EMBL" id="X05291">
    <property type="protein sequence ID" value="CAA28911.1"/>
    <property type="molecule type" value="Genomic_RNA"/>
</dbReference>
<dbReference type="PIR" id="H26262">
    <property type="entry name" value="ASLJR2"/>
</dbReference>
<dbReference type="SMR" id="P06938"/>
<dbReference type="Proteomes" id="UP000007426">
    <property type="component" value="Genome"/>
</dbReference>
<dbReference type="Proteomes" id="UP000246871">
    <property type="component" value="Segment"/>
</dbReference>
<dbReference type="GO" id="GO:0043657">
    <property type="term" value="C:host cell"/>
    <property type="evidence" value="ECO:0007669"/>
    <property type="project" value="GOC"/>
</dbReference>
<dbReference type="GO" id="GO:0042025">
    <property type="term" value="C:host cell nucleus"/>
    <property type="evidence" value="ECO:0007669"/>
    <property type="project" value="UniProtKB-SubCell"/>
</dbReference>
<dbReference type="GO" id="GO:0044423">
    <property type="term" value="C:virion component"/>
    <property type="evidence" value="ECO:0007669"/>
    <property type="project" value="UniProtKB-KW"/>
</dbReference>
<dbReference type="GO" id="GO:0046718">
    <property type="term" value="P:symbiont entry into host cell"/>
    <property type="evidence" value="ECO:0007669"/>
    <property type="project" value="UniProtKB-KW"/>
</dbReference>
<dbReference type="GO" id="GO:0039592">
    <property type="term" value="P:symbiont-mediated arrest of host cell cycle during G2/M transition"/>
    <property type="evidence" value="ECO:0007669"/>
    <property type="project" value="UniProtKB-KW"/>
</dbReference>
<dbReference type="GO" id="GO:0075732">
    <property type="term" value="P:viral penetration into host nucleus"/>
    <property type="evidence" value="ECO:0007669"/>
    <property type="project" value="UniProtKB-KW"/>
</dbReference>
<dbReference type="Gene3D" id="6.10.210.10">
    <property type="match status" value="1"/>
</dbReference>
<dbReference type="Gene3D" id="1.20.5.90">
    <property type="entry name" value="VpR/VpX protein, C-terminal domain"/>
    <property type="match status" value="1"/>
</dbReference>
<dbReference type="InterPro" id="IPR000012">
    <property type="entry name" value="RetroV_VpR/X"/>
</dbReference>
<dbReference type="Pfam" id="PF00522">
    <property type="entry name" value="VPR"/>
    <property type="match status" value="1"/>
</dbReference>
<dbReference type="PRINTS" id="PR00444">
    <property type="entry name" value="HIVVPRVPX"/>
</dbReference>
<protein>
    <recommendedName>
        <fullName>Protein Vpr</fullName>
    </recommendedName>
    <alternativeName>
        <fullName>R ORF protein</fullName>
    </alternativeName>
    <alternativeName>
        <fullName>Viral protein R</fullName>
    </alternativeName>
</protein>
<gene>
    <name type="primary">vpr</name>
</gene>
<sequence length="105" mass="11795">MAEAPTELPPVDGTPLREPGDEWIIEILREIKEEALKHFDPRLLIALGKYIYTRHGDTLEGARELIKVLQRALFTHFRAGCGHSRIGQTRGGNPLSAIPTPRNMQ</sequence>